<keyword id="KW-0963">Cytoplasm</keyword>
<keyword id="KW-0489">Methyltransferase</keyword>
<keyword id="KW-0698">rRNA processing</keyword>
<keyword id="KW-0949">S-adenosyl-L-methionine</keyword>
<keyword id="KW-0808">Transferase</keyword>
<organism>
    <name type="scientific">Klebsiella pneumoniae (strain 342)</name>
    <dbReference type="NCBI Taxonomy" id="507522"/>
    <lineage>
        <taxon>Bacteria</taxon>
        <taxon>Pseudomonadati</taxon>
        <taxon>Pseudomonadota</taxon>
        <taxon>Gammaproteobacteria</taxon>
        <taxon>Enterobacterales</taxon>
        <taxon>Enterobacteriaceae</taxon>
        <taxon>Klebsiella/Raoultella group</taxon>
        <taxon>Klebsiella</taxon>
        <taxon>Klebsiella pneumoniae complex</taxon>
    </lineage>
</organism>
<proteinExistence type="inferred from homology"/>
<feature type="chain" id="PRO_0000366612" description="Ribosomal RNA large subunit methyltransferase H">
    <location>
        <begin position="1"/>
        <end position="155"/>
    </location>
</feature>
<feature type="binding site" evidence="1">
    <location>
        <position position="72"/>
    </location>
    <ligand>
        <name>S-adenosyl-L-methionine</name>
        <dbReference type="ChEBI" id="CHEBI:59789"/>
    </ligand>
</feature>
<feature type="binding site" evidence="1">
    <location>
        <position position="103"/>
    </location>
    <ligand>
        <name>S-adenosyl-L-methionine</name>
        <dbReference type="ChEBI" id="CHEBI:59789"/>
    </ligand>
</feature>
<feature type="binding site" evidence="1">
    <location>
        <begin position="122"/>
        <end position="127"/>
    </location>
    <ligand>
        <name>S-adenosyl-L-methionine</name>
        <dbReference type="ChEBI" id="CHEBI:59789"/>
    </ligand>
</feature>
<dbReference type="EC" id="2.1.1.177" evidence="1"/>
<dbReference type="EMBL" id="CP000964">
    <property type="protein sequence ID" value="ACI10844.1"/>
    <property type="molecule type" value="Genomic_DNA"/>
</dbReference>
<dbReference type="SMR" id="B5XZR8"/>
<dbReference type="KEGG" id="kpe:KPK_3905"/>
<dbReference type="HOGENOM" id="CLU_100552_1_0_6"/>
<dbReference type="Proteomes" id="UP000001734">
    <property type="component" value="Chromosome"/>
</dbReference>
<dbReference type="GO" id="GO:0005737">
    <property type="term" value="C:cytoplasm"/>
    <property type="evidence" value="ECO:0007669"/>
    <property type="project" value="UniProtKB-SubCell"/>
</dbReference>
<dbReference type="GO" id="GO:0070038">
    <property type="term" value="F:rRNA (pseudouridine-N3-)-methyltransferase activity"/>
    <property type="evidence" value="ECO:0007669"/>
    <property type="project" value="UniProtKB-UniRule"/>
</dbReference>
<dbReference type="CDD" id="cd18081">
    <property type="entry name" value="RlmH-like"/>
    <property type="match status" value="1"/>
</dbReference>
<dbReference type="FunFam" id="3.40.1280.10:FF:000004">
    <property type="entry name" value="Ribosomal RNA large subunit methyltransferase H"/>
    <property type="match status" value="1"/>
</dbReference>
<dbReference type="Gene3D" id="3.40.1280.10">
    <property type="match status" value="1"/>
</dbReference>
<dbReference type="HAMAP" id="MF_00658">
    <property type="entry name" value="23SrRNA_methyltr_H"/>
    <property type="match status" value="1"/>
</dbReference>
<dbReference type="InterPro" id="IPR029028">
    <property type="entry name" value="Alpha/beta_knot_MTases"/>
</dbReference>
<dbReference type="InterPro" id="IPR003742">
    <property type="entry name" value="RlmH-like"/>
</dbReference>
<dbReference type="InterPro" id="IPR029026">
    <property type="entry name" value="tRNA_m1G_MTases_N"/>
</dbReference>
<dbReference type="NCBIfam" id="NF000984">
    <property type="entry name" value="PRK00103.1-1"/>
    <property type="match status" value="1"/>
</dbReference>
<dbReference type="NCBIfam" id="NF000986">
    <property type="entry name" value="PRK00103.1-4"/>
    <property type="match status" value="1"/>
</dbReference>
<dbReference type="NCBIfam" id="TIGR00246">
    <property type="entry name" value="tRNA_RlmH_YbeA"/>
    <property type="match status" value="1"/>
</dbReference>
<dbReference type="PANTHER" id="PTHR33603">
    <property type="entry name" value="METHYLTRANSFERASE"/>
    <property type="match status" value="1"/>
</dbReference>
<dbReference type="PANTHER" id="PTHR33603:SF1">
    <property type="entry name" value="RIBOSOMAL RNA LARGE SUBUNIT METHYLTRANSFERASE H"/>
    <property type="match status" value="1"/>
</dbReference>
<dbReference type="Pfam" id="PF02590">
    <property type="entry name" value="SPOUT_MTase"/>
    <property type="match status" value="1"/>
</dbReference>
<dbReference type="PIRSF" id="PIRSF004505">
    <property type="entry name" value="MT_bac"/>
    <property type="match status" value="1"/>
</dbReference>
<dbReference type="SUPFAM" id="SSF75217">
    <property type="entry name" value="alpha/beta knot"/>
    <property type="match status" value="1"/>
</dbReference>
<accession>B5XZR8</accession>
<sequence length="155" mass="17446">MKLQLVAVGTKMPDWVQTGFSEYLRRFPKDMPFELVEIPAGKRGKNADIKRILEKEGEMMLAAAGKNRIVTLDIPGKPWDTPQLARELERWKQDGRDVSLLVGGPEGLSPACKAAAEQSWSLSTLTLPHPLVRVLVAESLYRAWSITTNHPYHRE</sequence>
<reference key="1">
    <citation type="journal article" date="2008" name="PLoS Genet.">
        <title>Complete genome sequence of the N2-fixing broad host range endophyte Klebsiella pneumoniae 342 and virulence predictions verified in mice.</title>
        <authorList>
            <person name="Fouts D.E."/>
            <person name="Tyler H.L."/>
            <person name="DeBoy R.T."/>
            <person name="Daugherty S."/>
            <person name="Ren Q."/>
            <person name="Badger J.H."/>
            <person name="Durkin A.S."/>
            <person name="Huot H."/>
            <person name="Shrivastava S."/>
            <person name="Kothari S."/>
            <person name="Dodson R.J."/>
            <person name="Mohamoud Y."/>
            <person name="Khouri H."/>
            <person name="Roesch L.F.W."/>
            <person name="Krogfelt K.A."/>
            <person name="Struve C."/>
            <person name="Triplett E.W."/>
            <person name="Methe B.A."/>
        </authorList>
    </citation>
    <scope>NUCLEOTIDE SEQUENCE [LARGE SCALE GENOMIC DNA]</scope>
    <source>
        <strain>342</strain>
    </source>
</reference>
<protein>
    <recommendedName>
        <fullName evidence="1">Ribosomal RNA large subunit methyltransferase H</fullName>
        <ecNumber evidence="1">2.1.1.177</ecNumber>
    </recommendedName>
    <alternativeName>
        <fullName evidence="1">23S rRNA (pseudouridine1915-N3)-methyltransferase</fullName>
    </alternativeName>
    <alternativeName>
        <fullName evidence="1">23S rRNA m3Psi1915 methyltransferase</fullName>
    </alternativeName>
    <alternativeName>
        <fullName evidence="1">rRNA (pseudouridine-N3-)-methyltransferase RlmH</fullName>
    </alternativeName>
</protein>
<comment type="function">
    <text evidence="1">Specifically methylates the pseudouridine at position 1915 (m3Psi1915) in 23S rRNA.</text>
</comment>
<comment type="catalytic activity">
    <reaction evidence="1">
        <text>pseudouridine(1915) in 23S rRNA + S-adenosyl-L-methionine = N(3)-methylpseudouridine(1915) in 23S rRNA + S-adenosyl-L-homocysteine + H(+)</text>
        <dbReference type="Rhea" id="RHEA:42752"/>
        <dbReference type="Rhea" id="RHEA-COMP:10221"/>
        <dbReference type="Rhea" id="RHEA-COMP:10222"/>
        <dbReference type="ChEBI" id="CHEBI:15378"/>
        <dbReference type="ChEBI" id="CHEBI:57856"/>
        <dbReference type="ChEBI" id="CHEBI:59789"/>
        <dbReference type="ChEBI" id="CHEBI:65314"/>
        <dbReference type="ChEBI" id="CHEBI:74486"/>
        <dbReference type="EC" id="2.1.1.177"/>
    </reaction>
</comment>
<comment type="subunit">
    <text evidence="1">Homodimer.</text>
</comment>
<comment type="subcellular location">
    <subcellularLocation>
        <location evidence="1">Cytoplasm</location>
    </subcellularLocation>
</comment>
<comment type="similarity">
    <text evidence="1">Belongs to the RNA methyltransferase RlmH family.</text>
</comment>
<evidence type="ECO:0000255" key="1">
    <source>
        <dbReference type="HAMAP-Rule" id="MF_00658"/>
    </source>
</evidence>
<gene>
    <name evidence="1" type="primary">rlmH</name>
    <name type="ordered locus">KPK_3905</name>
</gene>
<name>RLMH_KLEP3</name>